<organism>
    <name type="scientific">Haemophilus influenzae (strain 86-028NP)</name>
    <dbReference type="NCBI Taxonomy" id="281310"/>
    <lineage>
        <taxon>Bacteria</taxon>
        <taxon>Pseudomonadati</taxon>
        <taxon>Pseudomonadota</taxon>
        <taxon>Gammaproteobacteria</taxon>
        <taxon>Pasteurellales</taxon>
        <taxon>Pasteurellaceae</taxon>
        <taxon>Haemophilus</taxon>
    </lineage>
</organism>
<protein>
    <recommendedName>
        <fullName evidence="1">Uracil phosphoribosyltransferase</fullName>
        <ecNumber evidence="1">2.4.2.9</ecNumber>
    </recommendedName>
    <alternativeName>
        <fullName evidence="1">UMP pyrophosphorylase</fullName>
    </alternativeName>
    <alternativeName>
        <fullName evidence="1">UPRTase</fullName>
    </alternativeName>
</protein>
<feature type="chain" id="PRO_1000053721" description="Uracil phosphoribosyltransferase">
    <location>
        <begin position="1"/>
        <end position="208"/>
    </location>
</feature>
<feature type="binding site" evidence="1">
    <location>
        <position position="78"/>
    </location>
    <ligand>
        <name>5-phospho-alpha-D-ribose 1-diphosphate</name>
        <dbReference type="ChEBI" id="CHEBI:58017"/>
    </ligand>
</feature>
<feature type="binding site" evidence="1">
    <location>
        <position position="103"/>
    </location>
    <ligand>
        <name>5-phospho-alpha-D-ribose 1-diphosphate</name>
        <dbReference type="ChEBI" id="CHEBI:58017"/>
    </ligand>
</feature>
<feature type="binding site" evidence="1">
    <location>
        <begin position="130"/>
        <end position="138"/>
    </location>
    <ligand>
        <name>5-phospho-alpha-D-ribose 1-diphosphate</name>
        <dbReference type="ChEBI" id="CHEBI:58017"/>
    </ligand>
</feature>
<feature type="binding site" evidence="1">
    <location>
        <position position="193"/>
    </location>
    <ligand>
        <name>uracil</name>
        <dbReference type="ChEBI" id="CHEBI:17568"/>
    </ligand>
</feature>
<feature type="binding site" evidence="1">
    <location>
        <begin position="198"/>
        <end position="200"/>
    </location>
    <ligand>
        <name>uracil</name>
        <dbReference type="ChEBI" id="CHEBI:17568"/>
    </ligand>
</feature>
<feature type="binding site" evidence="1">
    <location>
        <position position="199"/>
    </location>
    <ligand>
        <name>5-phospho-alpha-D-ribose 1-diphosphate</name>
        <dbReference type="ChEBI" id="CHEBI:58017"/>
    </ligand>
</feature>
<name>UPP_HAEI8</name>
<comment type="function">
    <text evidence="1">Catalyzes the conversion of uracil and 5-phospho-alpha-D-ribose 1-diphosphate (PRPP) to UMP and diphosphate.</text>
</comment>
<comment type="catalytic activity">
    <reaction evidence="1">
        <text>UMP + diphosphate = 5-phospho-alpha-D-ribose 1-diphosphate + uracil</text>
        <dbReference type="Rhea" id="RHEA:13017"/>
        <dbReference type="ChEBI" id="CHEBI:17568"/>
        <dbReference type="ChEBI" id="CHEBI:33019"/>
        <dbReference type="ChEBI" id="CHEBI:57865"/>
        <dbReference type="ChEBI" id="CHEBI:58017"/>
        <dbReference type="EC" id="2.4.2.9"/>
    </reaction>
</comment>
<comment type="cofactor">
    <cofactor evidence="1">
        <name>Mg(2+)</name>
        <dbReference type="ChEBI" id="CHEBI:18420"/>
    </cofactor>
    <text evidence="1">Binds 1 Mg(2+) ion per subunit. The magnesium is bound as Mg-PRPP.</text>
</comment>
<comment type="activity regulation">
    <text evidence="1">Allosterically activated by GTP.</text>
</comment>
<comment type="pathway">
    <text evidence="1">Pyrimidine metabolism; UMP biosynthesis via salvage pathway; UMP from uracil: step 1/1.</text>
</comment>
<comment type="similarity">
    <text evidence="1">Belongs to the UPRTase family.</text>
</comment>
<keyword id="KW-0021">Allosteric enzyme</keyword>
<keyword id="KW-0328">Glycosyltransferase</keyword>
<keyword id="KW-0342">GTP-binding</keyword>
<keyword id="KW-0460">Magnesium</keyword>
<keyword id="KW-0547">Nucleotide-binding</keyword>
<keyword id="KW-0808">Transferase</keyword>
<evidence type="ECO:0000255" key="1">
    <source>
        <dbReference type="HAMAP-Rule" id="MF_01218"/>
    </source>
</evidence>
<accession>Q4QJV5</accession>
<proteinExistence type="inferred from homology"/>
<dbReference type="EC" id="2.4.2.9" evidence="1"/>
<dbReference type="EMBL" id="CP000057">
    <property type="protein sequence ID" value="AAX88692.1"/>
    <property type="molecule type" value="Genomic_DNA"/>
</dbReference>
<dbReference type="RefSeq" id="WP_005657618.1">
    <property type="nucleotide sequence ID" value="NC_007146.2"/>
</dbReference>
<dbReference type="SMR" id="Q4QJV5"/>
<dbReference type="GeneID" id="93220638"/>
<dbReference type="KEGG" id="hit:NTHI1940"/>
<dbReference type="HOGENOM" id="CLU_067096_2_2_6"/>
<dbReference type="UniPathway" id="UPA00574">
    <property type="reaction ID" value="UER00636"/>
</dbReference>
<dbReference type="Proteomes" id="UP000002525">
    <property type="component" value="Chromosome"/>
</dbReference>
<dbReference type="GO" id="GO:0005525">
    <property type="term" value="F:GTP binding"/>
    <property type="evidence" value="ECO:0007669"/>
    <property type="project" value="UniProtKB-KW"/>
</dbReference>
<dbReference type="GO" id="GO:0000287">
    <property type="term" value="F:magnesium ion binding"/>
    <property type="evidence" value="ECO:0007669"/>
    <property type="project" value="UniProtKB-UniRule"/>
</dbReference>
<dbReference type="GO" id="GO:0004845">
    <property type="term" value="F:uracil phosphoribosyltransferase activity"/>
    <property type="evidence" value="ECO:0007669"/>
    <property type="project" value="UniProtKB-UniRule"/>
</dbReference>
<dbReference type="GO" id="GO:0044206">
    <property type="term" value="P:UMP salvage"/>
    <property type="evidence" value="ECO:0007669"/>
    <property type="project" value="UniProtKB-UniRule"/>
</dbReference>
<dbReference type="GO" id="GO:0006223">
    <property type="term" value="P:uracil salvage"/>
    <property type="evidence" value="ECO:0007669"/>
    <property type="project" value="InterPro"/>
</dbReference>
<dbReference type="CDD" id="cd06223">
    <property type="entry name" value="PRTases_typeI"/>
    <property type="match status" value="1"/>
</dbReference>
<dbReference type="FunFam" id="3.40.50.2020:FF:000003">
    <property type="entry name" value="Uracil phosphoribosyltransferase"/>
    <property type="match status" value="1"/>
</dbReference>
<dbReference type="Gene3D" id="3.40.50.2020">
    <property type="match status" value="1"/>
</dbReference>
<dbReference type="HAMAP" id="MF_01218_B">
    <property type="entry name" value="Upp_B"/>
    <property type="match status" value="1"/>
</dbReference>
<dbReference type="InterPro" id="IPR000836">
    <property type="entry name" value="PRibTrfase_dom"/>
</dbReference>
<dbReference type="InterPro" id="IPR029057">
    <property type="entry name" value="PRTase-like"/>
</dbReference>
<dbReference type="InterPro" id="IPR034332">
    <property type="entry name" value="Upp_B"/>
</dbReference>
<dbReference type="InterPro" id="IPR050054">
    <property type="entry name" value="UPRTase/APRTase"/>
</dbReference>
<dbReference type="InterPro" id="IPR005765">
    <property type="entry name" value="Ura_phspho_trans"/>
</dbReference>
<dbReference type="NCBIfam" id="NF001097">
    <property type="entry name" value="PRK00129.1"/>
    <property type="match status" value="1"/>
</dbReference>
<dbReference type="NCBIfam" id="TIGR01091">
    <property type="entry name" value="upp"/>
    <property type="match status" value="1"/>
</dbReference>
<dbReference type="PANTHER" id="PTHR32315">
    <property type="entry name" value="ADENINE PHOSPHORIBOSYLTRANSFERASE"/>
    <property type="match status" value="1"/>
</dbReference>
<dbReference type="PANTHER" id="PTHR32315:SF4">
    <property type="entry name" value="URACIL PHOSPHORIBOSYLTRANSFERASE, CHLOROPLASTIC"/>
    <property type="match status" value="1"/>
</dbReference>
<dbReference type="Pfam" id="PF14681">
    <property type="entry name" value="UPRTase"/>
    <property type="match status" value="1"/>
</dbReference>
<dbReference type="SUPFAM" id="SSF53271">
    <property type="entry name" value="PRTase-like"/>
    <property type="match status" value="1"/>
</dbReference>
<gene>
    <name evidence="1" type="primary">upp</name>
    <name type="ordered locus">NTHI1940</name>
</gene>
<sequence>MKLVEVKHPLVKHKLGVMREAEIDTKKFRELATEIGSLLTYEATSDLETEKVTINSWNGPVEIDRIKGKKVTVVPILRAGLGMMDGVLEHVPSARISVVGIYRNEETLKPVPYFQKLASDLEERLAIVVDPMLATGGSMIATLDLLKAKGCKHIKVLVLVAAPEGIKALEAAHPDIELYCASIDSHLNEQGYIIPGLGDAGDKIFGTK</sequence>
<reference key="1">
    <citation type="journal article" date="2005" name="J. Bacteriol.">
        <title>Genomic sequence of an otitis media isolate of nontypeable Haemophilus influenzae: comparative study with H. influenzae serotype d, strain KW20.</title>
        <authorList>
            <person name="Harrison A."/>
            <person name="Dyer D.W."/>
            <person name="Gillaspy A."/>
            <person name="Ray W.C."/>
            <person name="Mungur R."/>
            <person name="Carson M.B."/>
            <person name="Zhong H."/>
            <person name="Gipson J."/>
            <person name="Gipson M."/>
            <person name="Johnson L.S."/>
            <person name="Lewis L."/>
            <person name="Bakaletz L.O."/>
            <person name="Munson R.S. Jr."/>
        </authorList>
    </citation>
    <scope>NUCLEOTIDE SEQUENCE [LARGE SCALE GENOMIC DNA]</scope>
    <source>
        <strain>86-028NP</strain>
    </source>
</reference>